<accession>Q9CZU6</accession>
<accession>Q3UDP3</accession>
<name>CISY_MOUSE</name>
<gene>
    <name type="primary">Cs</name>
</gene>
<proteinExistence type="evidence at protein level"/>
<organism>
    <name type="scientific">Mus musculus</name>
    <name type="common">Mouse</name>
    <dbReference type="NCBI Taxonomy" id="10090"/>
    <lineage>
        <taxon>Eukaryota</taxon>
        <taxon>Metazoa</taxon>
        <taxon>Chordata</taxon>
        <taxon>Craniata</taxon>
        <taxon>Vertebrata</taxon>
        <taxon>Euteleostomi</taxon>
        <taxon>Mammalia</taxon>
        <taxon>Eutheria</taxon>
        <taxon>Euarchontoglires</taxon>
        <taxon>Glires</taxon>
        <taxon>Rodentia</taxon>
        <taxon>Myomorpha</taxon>
        <taxon>Muroidea</taxon>
        <taxon>Muridae</taxon>
        <taxon>Murinae</taxon>
        <taxon>Mus</taxon>
        <taxon>Mus</taxon>
    </lineage>
</organism>
<reference key="1">
    <citation type="submission" date="2001-02" db="EMBL/GenBank/DDBJ databases">
        <authorList>
            <person name="Sone H."/>
            <person name="Shimano H."/>
            <person name="Yamada N."/>
        </authorList>
    </citation>
    <scope>NUCLEOTIDE SEQUENCE [MRNA]</scope>
</reference>
<reference key="2">
    <citation type="journal article" date="2005" name="Science">
        <title>The transcriptional landscape of the mammalian genome.</title>
        <authorList>
            <person name="Carninci P."/>
            <person name="Kasukawa T."/>
            <person name="Katayama S."/>
            <person name="Gough J."/>
            <person name="Frith M.C."/>
            <person name="Maeda N."/>
            <person name="Oyama R."/>
            <person name="Ravasi T."/>
            <person name="Lenhard B."/>
            <person name="Wells C."/>
            <person name="Kodzius R."/>
            <person name="Shimokawa K."/>
            <person name="Bajic V.B."/>
            <person name="Brenner S.E."/>
            <person name="Batalov S."/>
            <person name="Forrest A.R."/>
            <person name="Zavolan M."/>
            <person name="Davis M.J."/>
            <person name="Wilming L.G."/>
            <person name="Aidinis V."/>
            <person name="Allen J.E."/>
            <person name="Ambesi-Impiombato A."/>
            <person name="Apweiler R."/>
            <person name="Aturaliya R.N."/>
            <person name="Bailey T.L."/>
            <person name="Bansal M."/>
            <person name="Baxter L."/>
            <person name="Beisel K.W."/>
            <person name="Bersano T."/>
            <person name="Bono H."/>
            <person name="Chalk A.M."/>
            <person name="Chiu K.P."/>
            <person name="Choudhary V."/>
            <person name="Christoffels A."/>
            <person name="Clutterbuck D.R."/>
            <person name="Crowe M.L."/>
            <person name="Dalla E."/>
            <person name="Dalrymple B.P."/>
            <person name="de Bono B."/>
            <person name="Della Gatta G."/>
            <person name="di Bernardo D."/>
            <person name="Down T."/>
            <person name="Engstrom P."/>
            <person name="Fagiolini M."/>
            <person name="Faulkner G."/>
            <person name="Fletcher C.F."/>
            <person name="Fukushima T."/>
            <person name="Furuno M."/>
            <person name="Futaki S."/>
            <person name="Gariboldi M."/>
            <person name="Georgii-Hemming P."/>
            <person name="Gingeras T.R."/>
            <person name="Gojobori T."/>
            <person name="Green R.E."/>
            <person name="Gustincich S."/>
            <person name="Harbers M."/>
            <person name="Hayashi Y."/>
            <person name="Hensch T.K."/>
            <person name="Hirokawa N."/>
            <person name="Hill D."/>
            <person name="Huminiecki L."/>
            <person name="Iacono M."/>
            <person name="Ikeo K."/>
            <person name="Iwama A."/>
            <person name="Ishikawa T."/>
            <person name="Jakt M."/>
            <person name="Kanapin A."/>
            <person name="Katoh M."/>
            <person name="Kawasawa Y."/>
            <person name="Kelso J."/>
            <person name="Kitamura H."/>
            <person name="Kitano H."/>
            <person name="Kollias G."/>
            <person name="Krishnan S.P."/>
            <person name="Kruger A."/>
            <person name="Kummerfeld S.K."/>
            <person name="Kurochkin I.V."/>
            <person name="Lareau L.F."/>
            <person name="Lazarevic D."/>
            <person name="Lipovich L."/>
            <person name="Liu J."/>
            <person name="Liuni S."/>
            <person name="McWilliam S."/>
            <person name="Madan Babu M."/>
            <person name="Madera M."/>
            <person name="Marchionni L."/>
            <person name="Matsuda H."/>
            <person name="Matsuzawa S."/>
            <person name="Miki H."/>
            <person name="Mignone F."/>
            <person name="Miyake S."/>
            <person name="Morris K."/>
            <person name="Mottagui-Tabar S."/>
            <person name="Mulder N."/>
            <person name="Nakano N."/>
            <person name="Nakauchi H."/>
            <person name="Ng P."/>
            <person name="Nilsson R."/>
            <person name="Nishiguchi S."/>
            <person name="Nishikawa S."/>
            <person name="Nori F."/>
            <person name="Ohara O."/>
            <person name="Okazaki Y."/>
            <person name="Orlando V."/>
            <person name="Pang K.C."/>
            <person name="Pavan W.J."/>
            <person name="Pavesi G."/>
            <person name="Pesole G."/>
            <person name="Petrovsky N."/>
            <person name="Piazza S."/>
            <person name="Reed J."/>
            <person name="Reid J.F."/>
            <person name="Ring B.Z."/>
            <person name="Ringwald M."/>
            <person name="Rost B."/>
            <person name="Ruan Y."/>
            <person name="Salzberg S.L."/>
            <person name="Sandelin A."/>
            <person name="Schneider C."/>
            <person name="Schoenbach C."/>
            <person name="Sekiguchi K."/>
            <person name="Semple C.A."/>
            <person name="Seno S."/>
            <person name="Sessa L."/>
            <person name="Sheng Y."/>
            <person name="Shibata Y."/>
            <person name="Shimada H."/>
            <person name="Shimada K."/>
            <person name="Silva D."/>
            <person name="Sinclair B."/>
            <person name="Sperling S."/>
            <person name="Stupka E."/>
            <person name="Sugiura K."/>
            <person name="Sultana R."/>
            <person name="Takenaka Y."/>
            <person name="Taki K."/>
            <person name="Tammoja K."/>
            <person name="Tan S.L."/>
            <person name="Tang S."/>
            <person name="Taylor M.S."/>
            <person name="Tegner J."/>
            <person name="Teichmann S.A."/>
            <person name="Ueda H.R."/>
            <person name="van Nimwegen E."/>
            <person name="Verardo R."/>
            <person name="Wei C.L."/>
            <person name="Yagi K."/>
            <person name="Yamanishi H."/>
            <person name="Zabarovsky E."/>
            <person name="Zhu S."/>
            <person name="Zimmer A."/>
            <person name="Hide W."/>
            <person name="Bult C."/>
            <person name="Grimmond S.M."/>
            <person name="Teasdale R.D."/>
            <person name="Liu E.T."/>
            <person name="Brusic V."/>
            <person name="Quackenbush J."/>
            <person name="Wahlestedt C."/>
            <person name="Mattick J.S."/>
            <person name="Hume D.A."/>
            <person name="Kai C."/>
            <person name="Sasaki D."/>
            <person name="Tomaru Y."/>
            <person name="Fukuda S."/>
            <person name="Kanamori-Katayama M."/>
            <person name="Suzuki M."/>
            <person name="Aoki J."/>
            <person name="Arakawa T."/>
            <person name="Iida J."/>
            <person name="Imamura K."/>
            <person name="Itoh M."/>
            <person name="Kato T."/>
            <person name="Kawaji H."/>
            <person name="Kawagashira N."/>
            <person name="Kawashima T."/>
            <person name="Kojima M."/>
            <person name="Kondo S."/>
            <person name="Konno H."/>
            <person name="Nakano K."/>
            <person name="Ninomiya N."/>
            <person name="Nishio T."/>
            <person name="Okada M."/>
            <person name="Plessy C."/>
            <person name="Shibata K."/>
            <person name="Shiraki T."/>
            <person name="Suzuki S."/>
            <person name="Tagami M."/>
            <person name="Waki K."/>
            <person name="Watahiki A."/>
            <person name="Okamura-Oho Y."/>
            <person name="Suzuki H."/>
            <person name="Kawai J."/>
            <person name="Hayashizaki Y."/>
        </authorList>
    </citation>
    <scope>NUCLEOTIDE SEQUENCE [LARGE SCALE MRNA]</scope>
    <source>
        <strain>C57BL/6J</strain>
        <tissue>Bone marrow</tissue>
        <tissue>Egg</tissue>
    </source>
</reference>
<reference key="3">
    <citation type="journal article" date="2004" name="Genome Res.">
        <title>The status, quality, and expansion of the NIH full-length cDNA project: the Mammalian Gene Collection (MGC).</title>
        <authorList>
            <consortium name="The MGC Project Team"/>
        </authorList>
    </citation>
    <scope>NUCLEOTIDE SEQUENCE [LARGE SCALE MRNA]</scope>
    <source>
        <strain>FVB/N</strain>
        <strain>FVB/N-3</strain>
        <tissue>Kidney</tissue>
        <tissue>Mammary tumor</tissue>
    </source>
</reference>
<reference key="4">
    <citation type="submission" date="2009-01" db="UniProtKB">
        <authorList>
            <person name="Lubec G."/>
            <person name="Klug S."/>
            <person name="Kang S.U."/>
            <person name="Sunyer B."/>
            <person name="Chen W.-Q."/>
        </authorList>
    </citation>
    <scope>PROTEIN SEQUENCE OF 35-43; 58-73; 77-92; 223-256; 328-351; 376-393 AND 429-450</scope>
    <scope>IDENTIFICATION BY MASS SPECTROMETRY</scope>
    <source>
        <strain>C57BL/6J</strain>
        <strain>OF1</strain>
        <tissue>Brain</tissue>
        <tissue>Hippocampus</tissue>
    </source>
</reference>
<reference key="5">
    <citation type="journal article" date="2010" name="Cell">
        <title>A tissue-specific atlas of mouse protein phosphorylation and expression.</title>
        <authorList>
            <person name="Huttlin E.L."/>
            <person name="Jedrychowski M.P."/>
            <person name="Elias J.E."/>
            <person name="Goswami T."/>
            <person name="Rad R."/>
            <person name="Beausoleil S.A."/>
            <person name="Villen J."/>
            <person name="Haas W."/>
            <person name="Sowa M.E."/>
            <person name="Gygi S.P."/>
        </authorList>
    </citation>
    <scope>PHOSPHORYLATION [LARGE SCALE ANALYSIS] AT SER-226</scope>
    <scope>IDENTIFICATION BY MASS SPECTROMETRY [LARGE SCALE ANALYSIS]</scope>
    <source>
        <tissue>Brain</tissue>
        <tissue>Brown adipose tissue</tissue>
        <tissue>Heart</tissue>
        <tissue>Kidney</tissue>
        <tissue>Liver</tissue>
        <tissue>Lung</tissue>
        <tissue>Pancreas</tissue>
        <tissue>Spleen</tissue>
        <tissue>Testis</tissue>
    </source>
</reference>
<reference key="6">
    <citation type="journal article" date="2013" name="Mol. Cell">
        <title>SIRT5-mediated lysine desuccinylation impacts diverse metabolic pathways.</title>
        <authorList>
            <person name="Park J."/>
            <person name="Chen Y."/>
            <person name="Tishkoff D.X."/>
            <person name="Peng C."/>
            <person name="Tan M."/>
            <person name="Dai L."/>
            <person name="Xie Z."/>
            <person name="Zhang Y."/>
            <person name="Zwaans B.M."/>
            <person name="Skinner M.E."/>
            <person name="Lombard D.B."/>
            <person name="Zhao Y."/>
        </authorList>
    </citation>
    <scope>SUCCINYLATION [LARGE SCALE ANALYSIS] AT LYS-57; LYS-103; LYS-193; LYS-321; LYS-327; LYS-375; LYS-393; LYS-450 AND LYS-459</scope>
    <scope>IDENTIFICATION BY MASS SPECTROMETRY [LARGE SCALE ANALYSIS]</scope>
    <source>
        <tissue>Embryonic fibroblast</tissue>
        <tissue>Liver</tissue>
    </source>
</reference>
<reference key="7">
    <citation type="journal article" date="2013" name="Proc. Natl. Acad. Sci. U.S.A.">
        <title>Label-free quantitative proteomics of the lysine acetylome in mitochondria identifies substrates of SIRT3 in metabolic pathways.</title>
        <authorList>
            <person name="Rardin M.J."/>
            <person name="Newman J.C."/>
            <person name="Held J.M."/>
            <person name="Cusack M.P."/>
            <person name="Sorensen D.J."/>
            <person name="Li B."/>
            <person name="Schilling B."/>
            <person name="Mooney S.D."/>
            <person name="Kahn C.R."/>
            <person name="Verdin E."/>
            <person name="Gibson B.W."/>
        </authorList>
    </citation>
    <scope>ACETYLATION [LARGE SCALE ANALYSIS] AT LYS-321; LYS-327; LYS-375; LYS-382; LYS-393 AND LYS-459</scope>
    <scope>IDENTIFICATION BY MASS SPECTROMETRY [LARGE SCALE ANALYSIS]</scope>
    <source>
        <tissue>Liver</tissue>
    </source>
</reference>
<comment type="function">
    <text evidence="6">Key enzyme of the Krebs tricarboxylic acid cycle which catalyzes the synthesis of citrate from acetyl coenzyme A and oxaloacetate.</text>
</comment>
<comment type="catalytic activity">
    <reaction evidence="5">
        <text>oxaloacetate + acetyl-CoA + H2O = citrate + CoA + H(+)</text>
        <dbReference type="Rhea" id="RHEA:16845"/>
        <dbReference type="ChEBI" id="CHEBI:15377"/>
        <dbReference type="ChEBI" id="CHEBI:15378"/>
        <dbReference type="ChEBI" id="CHEBI:16452"/>
        <dbReference type="ChEBI" id="CHEBI:16947"/>
        <dbReference type="ChEBI" id="CHEBI:57287"/>
        <dbReference type="ChEBI" id="CHEBI:57288"/>
        <dbReference type="EC" id="2.3.3.1"/>
    </reaction>
</comment>
<comment type="pathway">
    <text>Carbohydrate metabolism; tricarboxylic acid cycle; isocitrate from oxaloacetate: step 1/2.</text>
</comment>
<comment type="subunit">
    <text evidence="2">Homodimer.</text>
</comment>
<comment type="subcellular location">
    <subcellularLocation>
        <location evidence="3">Mitochondrion matrix</location>
    </subcellularLocation>
</comment>
<comment type="PTM">
    <text evidence="2">Methylated. Trimethylation at Lys-395 by CSKMT decreases citrate synthase activity.</text>
</comment>
<comment type="PTM">
    <text evidence="2">In response to mitochondrial stress, the precursor protein is ubiquitinated by the SIFI complex in the cytoplasm before mitochondrial import, leading to its degradation. Within the SIFI complex, UBR4 initiates ubiquitin chain that are further elongated or branched by KCMF1.</text>
</comment>
<comment type="miscellaneous">
    <text>Citrate synthase is found in nearly all cells capable of oxidative metabolism.</text>
</comment>
<comment type="similarity">
    <text evidence="6">Belongs to the citrate synthase family.</text>
</comment>
<protein>
    <recommendedName>
        <fullName>Citrate synthase, mitochondrial</fullName>
        <ecNumber>2.3.3.1</ecNumber>
    </recommendedName>
    <alternativeName>
        <fullName>Citrate (Si)-synthase</fullName>
    </alternativeName>
</protein>
<evidence type="ECO:0000250" key="1"/>
<evidence type="ECO:0000250" key="2">
    <source>
        <dbReference type="UniProtKB" id="O75390"/>
    </source>
</evidence>
<evidence type="ECO:0000250" key="3">
    <source>
        <dbReference type="UniProtKB" id="P00889"/>
    </source>
</evidence>
<evidence type="ECO:0000250" key="4">
    <source>
        <dbReference type="UniProtKB" id="Q29RK1"/>
    </source>
</evidence>
<evidence type="ECO:0000255" key="5">
    <source>
        <dbReference type="PROSITE-ProRule" id="PRU10117"/>
    </source>
</evidence>
<evidence type="ECO:0000305" key="6"/>
<evidence type="ECO:0007744" key="7">
    <source>
    </source>
</evidence>
<evidence type="ECO:0007744" key="8">
    <source>
    </source>
</evidence>
<evidence type="ECO:0007744" key="9">
    <source>
    </source>
</evidence>
<sequence>MALLTAATRLLGAKNSSCLVLAARHASASSTNLKDVLSNLIPKEQARIKTFKQQHGKTVVGQITVDMMYGGMRGMKGLVYETSVLDPDEGIRFRGYSIPECQKMLPKAKGGEEPLPEGLFWLLVTGQMPTEEQVSWLSREWAKRAALPSHVVTMLDNFPTNLHPMSQLSAAITALNSESNFARAYAEGMNRAKYWELIYEDCMDLIAKLPCVAAKIYRNLYREGSSIGAIDSRLDWSHNFTNMLGYTDPQFTELMRLYLTIHSDHEGGNVSAHTSHLVGSALSDPYLSFAAAMNGLAGPLHGLANQEVLVWLTQLQKEVGKDVSDEKLRDYIWNTLNSGRVVPGYGHAVLRKTDPRYSCQREFALKHLPKDPMFKLVAQLYKIVPNILLEQGKAKNPWPNVDAHSGVLLQYYGMTEMNYYTVLFGVSRALGVLAQLIWSRALGFPLERPKSMSTDGLMKFVDSK</sequence>
<feature type="transit peptide" description="Mitochondrion" evidence="1">
    <location>
        <begin position="1"/>
        <end position="27"/>
    </location>
</feature>
<feature type="chain" id="PRO_0000005472" description="Citrate synthase, mitochondrial">
    <location>
        <begin position="28"/>
        <end position="464"/>
    </location>
</feature>
<feature type="short sequence motif" description="SIFI-degron" evidence="2">
    <location>
        <begin position="2"/>
        <end position="21"/>
    </location>
</feature>
<feature type="active site" evidence="5">
    <location>
        <position position="301"/>
    </location>
</feature>
<feature type="active site" evidence="5">
    <location>
        <position position="347"/>
    </location>
</feature>
<feature type="active site" evidence="5">
    <location>
        <position position="402"/>
    </location>
</feature>
<feature type="binding site" description="in chain A" evidence="2">
    <location>
        <position position="356"/>
    </location>
    <ligand>
        <name>oxaloacetate</name>
        <dbReference type="ChEBI" id="CHEBI:16452"/>
        <note>ligand shared between homodimeric partners</note>
    </ligand>
</feature>
<feature type="binding site" description="in chain A" evidence="2">
    <location>
        <position position="428"/>
    </location>
    <ligand>
        <name>oxaloacetate</name>
        <dbReference type="ChEBI" id="CHEBI:16452"/>
        <note>ligand shared between homodimeric partners</note>
    </ligand>
</feature>
<feature type="binding site" description="in chain B" evidence="2">
    <location>
        <position position="448"/>
    </location>
    <ligand>
        <name>oxaloacetate</name>
        <dbReference type="ChEBI" id="CHEBI:16452"/>
        <note>ligand shared between homodimeric partners</note>
    </ligand>
</feature>
<feature type="modified residue" description="N6-succinyllysine" evidence="9">
    <location>
        <position position="57"/>
    </location>
</feature>
<feature type="modified residue" description="N6-acetyllysine; alternate" evidence="4">
    <location>
        <position position="76"/>
    </location>
</feature>
<feature type="modified residue" description="N6-succinyllysine; alternate" evidence="4">
    <location>
        <position position="76"/>
    </location>
</feature>
<feature type="modified residue" description="N6-succinyllysine" evidence="9">
    <location>
        <position position="103"/>
    </location>
</feature>
<feature type="modified residue" description="N6-succinyllysine" evidence="9">
    <location>
        <position position="193"/>
    </location>
</feature>
<feature type="modified residue" description="Phosphoserine" evidence="7">
    <location>
        <position position="226"/>
    </location>
</feature>
<feature type="modified residue" description="N6-acetyllysine; alternate" evidence="8">
    <location>
        <position position="321"/>
    </location>
</feature>
<feature type="modified residue" description="N6-succinyllysine; alternate" evidence="9">
    <location>
        <position position="321"/>
    </location>
</feature>
<feature type="modified residue" description="N6-acetyllysine; alternate" evidence="8">
    <location>
        <position position="327"/>
    </location>
</feature>
<feature type="modified residue" description="N6-succinyllysine; alternate" evidence="9">
    <location>
        <position position="327"/>
    </location>
</feature>
<feature type="modified residue" description="N6-acetyllysine; alternate" evidence="8">
    <location>
        <position position="375"/>
    </location>
</feature>
<feature type="modified residue" description="N6-succinyllysine; alternate" evidence="9">
    <location>
        <position position="375"/>
    </location>
</feature>
<feature type="modified residue" description="N6-acetyllysine" evidence="8">
    <location>
        <position position="382"/>
    </location>
</feature>
<feature type="modified residue" description="N6-acetyllysine; alternate" evidence="8">
    <location>
        <position position="393"/>
    </location>
</feature>
<feature type="modified residue" description="N6-succinyllysine; alternate" evidence="9">
    <location>
        <position position="393"/>
    </location>
</feature>
<feature type="modified residue" description="N6,N6,N6-trimethyllysine" evidence="2">
    <location>
        <position position="395"/>
    </location>
</feature>
<feature type="modified residue" description="N6-succinyllysine" evidence="9">
    <location>
        <position position="450"/>
    </location>
</feature>
<feature type="modified residue" description="N6-acetyllysine; alternate" evidence="8">
    <location>
        <position position="459"/>
    </location>
</feature>
<feature type="modified residue" description="N6-succinyllysine; alternate" evidence="9">
    <location>
        <position position="459"/>
    </location>
</feature>
<keyword id="KW-0002">3D-structure</keyword>
<keyword id="KW-0007">Acetylation</keyword>
<keyword id="KW-0903">Direct protein sequencing</keyword>
<keyword id="KW-0488">Methylation</keyword>
<keyword id="KW-0496">Mitochondrion</keyword>
<keyword id="KW-0597">Phosphoprotein</keyword>
<keyword id="KW-1185">Reference proteome</keyword>
<keyword id="KW-0808">Transferase</keyword>
<keyword id="KW-0809">Transit peptide</keyword>
<keyword id="KW-0816">Tricarboxylic acid cycle</keyword>
<keyword id="KW-0832">Ubl conjugation</keyword>
<dbReference type="EC" id="2.3.3.1"/>
<dbReference type="EMBL" id="AB056479">
    <property type="protein sequence ID" value="BAB63945.1"/>
    <property type="molecule type" value="mRNA"/>
</dbReference>
<dbReference type="EMBL" id="AK012151">
    <property type="protein sequence ID" value="BAB28063.1"/>
    <property type="molecule type" value="mRNA"/>
</dbReference>
<dbReference type="EMBL" id="AK145643">
    <property type="protein sequence ID" value="BAE26560.1"/>
    <property type="molecule type" value="mRNA"/>
</dbReference>
<dbReference type="EMBL" id="AK149990">
    <property type="protein sequence ID" value="BAE29218.1"/>
    <property type="molecule type" value="mRNA"/>
</dbReference>
<dbReference type="EMBL" id="AK163273">
    <property type="protein sequence ID" value="BAE37268.1"/>
    <property type="molecule type" value="mRNA"/>
</dbReference>
<dbReference type="EMBL" id="AK166814">
    <property type="protein sequence ID" value="BAE39041.1"/>
    <property type="molecule type" value="mRNA"/>
</dbReference>
<dbReference type="EMBL" id="AK167125">
    <property type="protein sequence ID" value="BAE39273.1"/>
    <property type="molecule type" value="mRNA"/>
</dbReference>
<dbReference type="EMBL" id="BC013554">
    <property type="protein sequence ID" value="AAH13554.1"/>
    <property type="molecule type" value="mRNA"/>
</dbReference>
<dbReference type="EMBL" id="BC029754">
    <property type="protein sequence ID" value="AAH29754.1"/>
    <property type="molecule type" value="mRNA"/>
</dbReference>
<dbReference type="CCDS" id="CCDS24273.1"/>
<dbReference type="RefSeq" id="NP_080720.1">
    <property type="nucleotide sequence ID" value="NM_026444.4"/>
</dbReference>
<dbReference type="PDB" id="3NZI">
    <property type="method" value="X-ray"/>
    <property type="resolution" value="2.75 A"/>
    <property type="chains" value="B=371-377"/>
</dbReference>
<dbReference type="PDBsum" id="3NZI"/>
<dbReference type="SMR" id="Q9CZU6"/>
<dbReference type="BioGRID" id="198926">
    <property type="interactions" value="80"/>
</dbReference>
<dbReference type="FunCoup" id="Q9CZU6">
    <property type="interactions" value="2564"/>
</dbReference>
<dbReference type="IntAct" id="Q9CZU6">
    <property type="interactions" value="9"/>
</dbReference>
<dbReference type="MINT" id="Q9CZU6"/>
<dbReference type="STRING" id="10090.ENSMUSP00000005826"/>
<dbReference type="ChEMBL" id="CHEMBL2176798"/>
<dbReference type="GlyGen" id="Q9CZU6">
    <property type="glycosylation" value="1 site, 1 O-linked glycan (1 site)"/>
</dbReference>
<dbReference type="iPTMnet" id="Q9CZU6"/>
<dbReference type="MetOSite" id="Q9CZU6"/>
<dbReference type="PhosphoSitePlus" id="Q9CZU6"/>
<dbReference type="SwissPalm" id="Q9CZU6"/>
<dbReference type="jPOST" id="Q9CZU6"/>
<dbReference type="PaxDb" id="10090-ENSMUSP00000005826"/>
<dbReference type="PeptideAtlas" id="Q9CZU6"/>
<dbReference type="ProteomicsDB" id="281628"/>
<dbReference type="Pumba" id="Q9CZU6"/>
<dbReference type="DNASU" id="12974"/>
<dbReference type="Ensembl" id="ENSMUST00000005826.9">
    <property type="protein sequence ID" value="ENSMUSP00000005826.8"/>
    <property type="gene ID" value="ENSMUSG00000005683.9"/>
</dbReference>
<dbReference type="GeneID" id="12974"/>
<dbReference type="KEGG" id="mmu:12974"/>
<dbReference type="UCSC" id="uc007hmj.1">
    <property type="organism name" value="mouse"/>
</dbReference>
<dbReference type="AGR" id="MGI:88529"/>
<dbReference type="CTD" id="1431"/>
<dbReference type="MGI" id="MGI:88529">
    <property type="gene designation" value="Cs"/>
</dbReference>
<dbReference type="VEuPathDB" id="HostDB:ENSMUSG00000005683"/>
<dbReference type="eggNOG" id="KOG2617">
    <property type="taxonomic scope" value="Eukaryota"/>
</dbReference>
<dbReference type="GeneTree" id="ENSGT00390000006813"/>
<dbReference type="HOGENOM" id="CLU_022049_2_1_1"/>
<dbReference type="InParanoid" id="Q9CZU6"/>
<dbReference type="OMA" id="VLEWLFK"/>
<dbReference type="OrthoDB" id="8017587at2759"/>
<dbReference type="PhylomeDB" id="Q9CZU6"/>
<dbReference type="TreeFam" id="TF300398"/>
<dbReference type="BRENDA" id="2.3.3.1">
    <property type="organism ID" value="3474"/>
</dbReference>
<dbReference type="Reactome" id="R-MMU-71403">
    <property type="pathway name" value="Citric acid cycle (TCA cycle)"/>
</dbReference>
<dbReference type="Reactome" id="R-MMU-9837999">
    <property type="pathway name" value="Mitochondrial protein degradation"/>
</dbReference>
<dbReference type="UniPathway" id="UPA00223">
    <property type="reaction ID" value="UER00717"/>
</dbReference>
<dbReference type="BioGRID-ORCS" id="12974">
    <property type="hits" value="20 hits in 82 CRISPR screens"/>
</dbReference>
<dbReference type="CD-CODE" id="CE726F99">
    <property type="entry name" value="Postsynaptic density"/>
</dbReference>
<dbReference type="ChiTaRS" id="Cs">
    <property type="organism name" value="mouse"/>
</dbReference>
<dbReference type="EvolutionaryTrace" id="Q9CZU6"/>
<dbReference type="PRO" id="PR:Q9CZU6"/>
<dbReference type="Proteomes" id="UP000000589">
    <property type="component" value="Chromosome 10"/>
</dbReference>
<dbReference type="RNAct" id="Q9CZU6">
    <property type="molecule type" value="protein"/>
</dbReference>
<dbReference type="Bgee" id="ENSMUSG00000005683">
    <property type="expression patterns" value="Expressed in paneth cell and 274 other cell types or tissues"/>
</dbReference>
<dbReference type="GO" id="GO:0005759">
    <property type="term" value="C:mitochondrial matrix"/>
    <property type="evidence" value="ECO:0000314"/>
    <property type="project" value="MGI"/>
</dbReference>
<dbReference type="GO" id="GO:0005739">
    <property type="term" value="C:mitochondrion"/>
    <property type="evidence" value="ECO:0007005"/>
    <property type="project" value="MGI"/>
</dbReference>
<dbReference type="GO" id="GO:0046912">
    <property type="term" value="F:acyltransferase activity, acyl groups converted into alkyl on transfer"/>
    <property type="evidence" value="ECO:0000314"/>
    <property type="project" value="MGI"/>
</dbReference>
<dbReference type="GO" id="GO:0004108">
    <property type="term" value="F:citrate (Si)-synthase activity"/>
    <property type="evidence" value="ECO:0000250"/>
    <property type="project" value="UniProtKB"/>
</dbReference>
<dbReference type="GO" id="GO:0042802">
    <property type="term" value="F:identical protein binding"/>
    <property type="evidence" value="ECO:0000250"/>
    <property type="project" value="UniProtKB"/>
</dbReference>
<dbReference type="GO" id="GO:0005975">
    <property type="term" value="P:carbohydrate metabolic process"/>
    <property type="evidence" value="ECO:0000250"/>
    <property type="project" value="UniProtKB"/>
</dbReference>
<dbReference type="GO" id="GO:0006101">
    <property type="term" value="P:citrate metabolic process"/>
    <property type="evidence" value="ECO:0007669"/>
    <property type="project" value="InterPro"/>
</dbReference>
<dbReference type="GO" id="GO:0006099">
    <property type="term" value="P:tricarboxylic acid cycle"/>
    <property type="evidence" value="ECO:0007669"/>
    <property type="project" value="UniProtKB-UniPathway"/>
</dbReference>
<dbReference type="CDD" id="cd06105">
    <property type="entry name" value="ScCit1-2_like"/>
    <property type="match status" value="1"/>
</dbReference>
<dbReference type="FunFam" id="1.10.230.10:FF:000001">
    <property type="entry name" value="Citrate synthase"/>
    <property type="match status" value="1"/>
</dbReference>
<dbReference type="FunFam" id="1.10.580.10:FF:000001">
    <property type="entry name" value="Citrate synthase"/>
    <property type="match status" value="1"/>
</dbReference>
<dbReference type="Gene3D" id="1.10.580.10">
    <property type="entry name" value="Citrate Synthase, domain 1"/>
    <property type="match status" value="1"/>
</dbReference>
<dbReference type="Gene3D" id="1.10.230.10">
    <property type="entry name" value="Cytochrome P450-Terp, domain 2"/>
    <property type="match status" value="1"/>
</dbReference>
<dbReference type="InterPro" id="IPR016142">
    <property type="entry name" value="Citrate_synth-like_lrg_a-sub"/>
</dbReference>
<dbReference type="InterPro" id="IPR016143">
    <property type="entry name" value="Citrate_synth-like_sm_a-sub"/>
</dbReference>
<dbReference type="InterPro" id="IPR002020">
    <property type="entry name" value="Citrate_synthase"/>
</dbReference>
<dbReference type="InterPro" id="IPR019810">
    <property type="entry name" value="Citrate_synthase_AS"/>
</dbReference>
<dbReference type="InterPro" id="IPR010109">
    <property type="entry name" value="Citrate_synthase_euk"/>
</dbReference>
<dbReference type="InterPro" id="IPR036969">
    <property type="entry name" value="Citrate_synthase_sf"/>
</dbReference>
<dbReference type="NCBIfam" id="TIGR01793">
    <property type="entry name" value="cit_synth_euk"/>
    <property type="match status" value="1"/>
</dbReference>
<dbReference type="NCBIfam" id="NF007128">
    <property type="entry name" value="PRK09569.1"/>
    <property type="match status" value="1"/>
</dbReference>
<dbReference type="PANTHER" id="PTHR11739">
    <property type="entry name" value="CITRATE SYNTHASE"/>
    <property type="match status" value="1"/>
</dbReference>
<dbReference type="PANTHER" id="PTHR11739:SF8">
    <property type="entry name" value="CITRATE SYNTHASE, MITOCHONDRIAL"/>
    <property type="match status" value="1"/>
</dbReference>
<dbReference type="Pfam" id="PF00285">
    <property type="entry name" value="Citrate_synt"/>
    <property type="match status" value="1"/>
</dbReference>
<dbReference type="PRINTS" id="PR00143">
    <property type="entry name" value="CITRTSNTHASE"/>
</dbReference>
<dbReference type="SUPFAM" id="SSF48256">
    <property type="entry name" value="Citrate synthase"/>
    <property type="match status" value="1"/>
</dbReference>
<dbReference type="PROSITE" id="PS00480">
    <property type="entry name" value="CITRATE_SYNTHASE"/>
    <property type="match status" value="1"/>
</dbReference>